<proteinExistence type="evidence at transcript level"/>
<dbReference type="EC" id="2.7.6.1"/>
<dbReference type="EMBL" id="AP004047">
    <property type="protein sequence ID" value="BAD09159.1"/>
    <property type="molecule type" value="Genomic_DNA"/>
</dbReference>
<dbReference type="EMBL" id="AP004165">
    <property type="protein sequence ID" value="BAD07797.1"/>
    <property type="molecule type" value="Genomic_DNA"/>
</dbReference>
<dbReference type="EMBL" id="AP008208">
    <property type="protein sequence ID" value="BAF09835.1"/>
    <property type="molecule type" value="Genomic_DNA"/>
</dbReference>
<dbReference type="EMBL" id="AP014958">
    <property type="protein sequence ID" value="BAS80597.1"/>
    <property type="molecule type" value="Genomic_DNA"/>
</dbReference>
<dbReference type="EMBL" id="CM000139">
    <property type="protein sequence ID" value="EEE57681.1"/>
    <property type="molecule type" value="Genomic_DNA"/>
</dbReference>
<dbReference type="EMBL" id="AK103643">
    <property type="protein sequence ID" value="BAG96184.1"/>
    <property type="molecule type" value="mRNA"/>
</dbReference>
<dbReference type="EMBL" id="AK104867">
    <property type="protein sequence ID" value="BAG97003.1"/>
    <property type="molecule type" value="mRNA"/>
</dbReference>
<dbReference type="RefSeq" id="XP_015625566.1">
    <property type="nucleotide sequence ID" value="XM_015770080.1"/>
</dbReference>
<dbReference type="SMR" id="Q6ZFT5"/>
<dbReference type="FunCoup" id="Q6ZFT5">
    <property type="interactions" value="832"/>
</dbReference>
<dbReference type="STRING" id="39947.Q6ZFT5"/>
<dbReference type="PaxDb" id="39947-Q6ZFT5"/>
<dbReference type="EnsemblPlants" id="Os02t0714600-01">
    <property type="protein sequence ID" value="Os02t0714600-01"/>
    <property type="gene ID" value="Os02g0714600"/>
</dbReference>
<dbReference type="EnsemblPlants" id="Os02t0714600-02">
    <property type="protein sequence ID" value="Os02t0714600-02"/>
    <property type="gene ID" value="Os02g0714600"/>
</dbReference>
<dbReference type="Gramene" id="Os02t0714600-01">
    <property type="protein sequence ID" value="Os02t0714600-01"/>
    <property type="gene ID" value="Os02g0714600"/>
</dbReference>
<dbReference type="Gramene" id="Os02t0714600-02">
    <property type="protein sequence ID" value="Os02t0714600-02"/>
    <property type="gene ID" value="Os02g0714600"/>
</dbReference>
<dbReference type="KEGG" id="dosa:Os02g0714600"/>
<dbReference type="eggNOG" id="KOG1448">
    <property type="taxonomic scope" value="Eukaryota"/>
</dbReference>
<dbReference type="HOGENOM" id="CLU_048814_0_0_1"/>
<dbReference type="InParanoid" id="Q6ZFT5"/>
<dbReference type="OMA" id="FENFWIT"/>
<dbReference type="OrthoDB" id="10263753at2759"/>
<dbReference type="PlantReactome" id="R-OSA-1119278">
    <property type="pathway name" value="PRPP biosynthesis I"/>
</dbReference>
<dbReference type="Proteomes" id="UP000000763">
    <property type="component" value="Chromosome 2"/>
</dbReference>
<dbReference type="Proteomes" id="UP000007752">
    <property type="component" value="Chromosome 2"/>
</dbReference>
<dbReference type="Proteomes" id="UP000059680">
    <property type="component" value="Chromosome 2"/>
</dbReference>
<dbReference type="GO" id="GO:0005737">
    <property type="term" value="C:cytoplasm"/>
    <property type="evidence" value="ECO:0000318"/>
    <property type="project" value="GO_Central"/>
</dbReference>
<dbReference type="GO" id="GO:0002189">
    <property type="term" value="C:ribose phosphate diphosphokinase complex"/>
    <property type="evidence" value="ECO:0000318"/>
    <property type="project" value="GO_Central"/>
</dbReference>
<dbReference type="GO" id="GO:0005524">
    <property type="term" value="F:ATP binding"/>
    <property type="evidence" value="ECO:0007669"/>
    <property type="project" value="UniProtKB-KW"/>
</dbReference>
<dbReference type="GO" id="GO:0016301">
    <property type="term" value="F:kinase activity"/>
    <property type="evidence" value="ECO:0007669"/>
    <property type="project" value="UniProtKB-KW"/>
</dbReference>
<dbReference type="GO" id="GO:0000287">
    <property type="term" value="F:magnesium ion binding"/>
    <property type="evidence" value="ECO:0007669"/>
    <property type="project" value="InterPro"/>
</dbReference>
<dbReference type="GO" id="GO:0004749">
    <property type="term" value="F:ribose phosphate diphosphokinase activity"/>
    <property type="evidence" value="ECO:0000318"/>
    <property type="project" value="GO_Central"/>
</dbReference>
<dbReference type="GO" id="GO:0006015">
    <property type="term" value="P:5-phosphoribose 1-diphosphate biosynthetic process"/>
    <property type="evidence" value="ECO:0000318"/>
    <property type="project" value="GO_Central"/>
</dbReference>
<dbReference type="GO" id="GO:0006164">
    <property type="term" value="P:purine nucleotide biosynthetic process"/>
    <property type="evidence" value="ECO:0000318"/>
    <property type="project" value="GO_Central"/>
</dbReference>
<dbReference type="CDD" id="cd06223">
    <property type="entry name" value="PRTases_typeI"/>
    <property type="match status" value="1"/>
</dbReference>
<dbReference type="FunFam" id="3.40.50.2020:FF:000034">
    <property type="entry name" value="Ribose-phosphate pyrophosphokinase 4"/>
    <property type="match status" value="1"/>
</dbReference>
<dbReference type="FunFam" id="3.40.50.2020:FF:000032">
    <property type="entry name" value="ribose-phosphate pyrophosphokinase 4"/>
    <property type="match status" value="1"/>
</dbReference>
<dbReference type="Gene3D" id="3.40.50.2020">
    <property type="match status" value="2"/>
</dbReference>
<dbReference type="InterPro" id="IPR029099">
    <property type="entry name" value="Pribosyltran_N"/>
</dbReference>
<dbReference type="InterPro" id="IPR000836">
    <property type="entry name" value="PRibTrfase_dom"/>
</dbReference>
<dbReference type="InterPro" id="IPR029057">
    <property type="entry name" value="PRTase-like"/>
</dbReference>
<dbReference type="InterPro" id="IPR005946">
    <property type="entry name" value="Rib-P_diPkinase"/>
</dbReference>
<dbReference type="NCBIfam" id="TIGR01251">
    <property type="entry name" value="ribP_PPkin"/>
    <property type="match status" value="1"/>
</dbReference>
<dbReference type="PANTHER" id="PTHR10210">
    <property type="entry name" value="RIBOSE-PHOSPHATE DIPHOSPHOKINASE FAMILY MEMBER"/>
    <property type="match status" value="1"/>
</dbReference>
<dbReference type="PANTHER" id="PTHR10210:SF34">
    <property type="entry name" value="RIBOSE-PHOSPHATE PYROPHOSPHOKINASE 4"/>
    <property type="match status" value="1"/>
</dbReference>
<dbReference type="Pfam" id="PF00156">
    <property type="entry name" value="Pribosyltran"/>
    <property type="match status" value="1"/>
</dbReference>
<dbReference type="Pfam" id="PF13793">
    <property type="entry name" value="Pribosyltran_N"/>
    <property type="match status" value="1"/>
</dbReference>
<dbReference type="SMART" id="SM01400">
    <property type="entry name" value="Pribosyltran_N"/>
    <property type="match status" value="1"/>
</dbReference>
<dbReference type="SUPFAM" id="SSF53271">
    <property type="entry name" value="PRTase-like"/>
    <property type="match status" value="2"/>
</dbReference>
<evidence type="ECO:0000250" key="1"/>
<evidence type="ECO:0000255" key="2"/>
<evidence type="ECO:0000305" key="3"/>
<evidence type="ECO:0000312" key="4">
    <source>
        <dbReference type="EMBL" id="EEE57681.1"/>
    </source>
</evidence>
<organism>
    <name type="scientific">Oryza sativa subsp. japonica</name>
    <name type="common">Rice</name>
    <dbReference type="NCBI Taxonomy" id="39947"/>
    <lineage>
        <taxon>Eukaryota</taxon>
        <taxon>Viridiplantae</taxon>
        <taxon>Streptophyta</taxon>
        <taxon>Embryophyta</taxon>
        <taxon>Tracheophyta</taxon>
        <taxon>Spermatophyta</taxon>
        <taxon>Magnoliopsida</taxon>
        <taxon>Liliopsida</taxon>
        <taxon>Poales</taxon>
        <taxon>Poaceae</taxon>
        <taxon>BOP clade</taxon>
        <taxon>Oryzoideae</taxon>
        <taxon>Oryzeae</taxon>
        <taxon>Oryzinae</taxon>
        <taxon>Oryza</taxon>
        <taxon>Oryza sativa</taxon>
    </lineage>
</organism>
<comment type="catalytic activity">
    <reaction>
        <text>D-ribose 5-phosphate + ATP = 5-phospho-alpha-D-ribose 1-diphosphate + AMP + H(+)</text>
        <dbReference type="Rhea" id="RHEA:15609"/>
        <dbReference type="ChEBI" id="CHEBI:15378"/>
        <dbReference type="ChEBI" id="CHEBI:30616"/>
        <dbReference type="ChEBI" id="CHEBI:58017"/>
        <dbReference type="ChEBI" id="CHEBI:78346"/>
        <dbReference type="ChEBI" id="CHEBI:456215"/>
        <dbReference type="EC" id="2.7.6.1"/>
    </reaction>
</comment>
<comment type="cofactor">
    <cofactor evidence="1">
        <name>Mg(2+)</name>
        <dbReference type="ChEBI" id="CHEBI:18420"/>
    </cofactor>
    <text evidence="1">Binds 1 Mg(2+) ion per subunit.</text>
</comment>
<comment type="similarity">
    <text evidence="3">Belongs to the ribose-phosphate pyrophosphokinase family.</text>
</comment>
<accession>Q6ZFT5</accession>
<accession>Q0DY53</accession>
<sequence length="325" mass="36149">MEVVVARQPKAKKQINLFYCSECEELALKVAASSDTIHLQSINWRSFDDGFPNLFINNAHDIRGQHVAFLASFSSPSVIFEQISVIFALPKLFIASFTLVLPFFPTGSFERVEEEGDVATAFTLARILSMIPKSRGGPTSVVIYDIHALQERFYFGDDVLPCFETGIPLLLQRLRQLPDADNITIAFPDDGAWKRFHKLLLNFPMVVCAKVREGDKRIVRIKEGNPEGRHVVIVDDLVQSGGTLRECQKVLAAHGAAKVSAYVTHAVFPKQSYERFTHTNSAGSADKFAYFWITDSCPQTVKAINQQPPFEVLSLAGSIADALQI</sequence>
<gene>
    <name type="ordered locus">Os02g0714600</name>
    <name type="ordered locus">LOC_Os02g48390</name>
    <name type="ORF">OJ1191_G08.2</name>
    <name type="ORF">OJ1479_B12.26</name>
    <name evidence="4" type="ORF">OsJ_08135</name>
</gene>
<reference key="1">
    <citation type="journal article" date="2005" name="Nature">
        <title>The map-based sequence of the rice genome.</title>
        <authorList>
            <consortium name="International rice genome sequencing project (IRGSP)"/>
        </authorList>
    </citation>
    <scope>NUCLEOTIDE SEQUENCE [LARGE SCALE GENOMIC DNA]</scope>
    <source>
        <strain>cv. Nipponbare</strain>
    </source>
</reference>
<reference key="2">
    <citation type="journal article" date="2008" name="Nucleic Acids Res.">
        <title>The rice annotation project database (RAP-DB): 2008 update.</title>
        <authorList>
            <consortium name="The rice annotation project (RAP)"/>
        </authorList>
    </citation>
    <scope>GENOME REANNOTATION</scope>
    <source>
        <strain>cv. Nipponbare</strain>
    </source>
</reference>
<reference key="3">
    <citation type="journal article" date="2013" name="Rice">
        <title>Improvement of the Oryza sativa Nipponbare reference genome using next generation sequence and optical map data.</title>
        <authorList>
            <person name="Kawahara Y."/>
            <person name="de la Bastide M."/>
            <person name="Hamilton J.P."/>
            <person name="Kanamori H."/>
            <person name="McCombie W.R."/>
            <person name="Ouyang S."/>
            <person name="Schwartz D.C."/>
            <person name="Tanaka T."/>
            <person name="Wu J."/>
            <person name="Zhou S."/>
            <person name="Childs K.L."/>
            <person name="Davidson R.M."/>
            <person name="Lin H."/>
            <person name="Quesada-Ocampo L."/>
            <person name="Vaillancourt B."/>
            <person name="Sakai H."/>
            <person name="Lee S.S."/>
            <person name="Kim J."/>
            <person name="Numa H."/>
            <person name="Itoh T."/>
            <person name="Buell C.R."/>
            <person name="Matsumoto T."/>
        </authorList>
    </citation>
    <scope>GENOME REANNOTATION</scope>
    <source>
        <strain>cv. Nipponbare</strain>
    </source>
</reference>
<reference key="4">
    <citation type="journal article" date="2005" name="PLoS Biol.">
        <title>The genomes of Oryza sativa: a history of duplications.</title>
        <authorList>
            <person name="Yu J."/>
            <person name="Wang J."/>
            <person name="Lin W."/>
            <person name="Li S."/>
            <person name="Li H."/>
            <person name="Zhou J."/>
            <person name="Ni P."/>
            <person name="Dong W."/>
            <person name="Hu S."/>
            <person name="Zeng C."/>
            <person name="Zhang J."/>
            <person name="Zhang Y."/>
            <person name="Li R."/>
            <person name="Xu Z."/>
            <person name="Li S."/>
            <person name="Li X."/>
            <person name="Zheng H."/>
            <person name="Cong L."/>
            <person name="Lin L."/>
            <person name="Yin J."/>
            <person name="Geng J."/>
            <person name="Li G."/>
            <person name="Shi J."/>
            <person name="Liu J."/>
            <person name="Lv H."/>
            <person name="Li J."/>
            <person name="Wang J."/>
            <person name="Deng Y."/>
            <person name="Ran L."/>
            <person name="Shi X."/>
            <person name="Wang X."/>
            <person name="Wu Q."/>
            <person name="Li C."/>
            <person name="Ren X."/>
            <person name="Wang J."/>
            <person name="Wang X."/>
            <person name="Li D."/>
            <person name="Liu D."/>
            <person name="Zhang X."/>
            <person name="Ji Z."/>
            <person name="Zhao W."/>
            <person name="Sun Y."/>
            <person name="Zhang Z."/>
            <person name="Bao J."/>
            <person name="Han Y."/>
            <person name="Dong L."/>
            <person name="Ji J."/>
            <person name="Chen P."/>
            <person name="Wu S."/>
            <person name="Liu J."/>
            <person name="Xiao Y."/>
            <person name="Bu D."/>
            <person name="Tan J."/>
            <person name="Yang L."/>
            <person name="Ye C."/>
            <person name="Zhang J."/>
            <person name="Xu J."/>
            <person name="Zhou Y."/>
            <person name="Yu Y."/>
            <person name="Zhang B."/>
            <person name="Zhuang S."/>
            <person name="Wei H."/>
            <person name="Liu B."/>
            <person name="Lei M."/>
            <person name="Yu H."/>
            <person name="Li Y."/>
            <person name="Xu H."/>
            <person name="Wei S."/>
            <person name="He X."/>
            <person name="Fang L."/>
            <person name="Zhang Z."/>
            <person name="Zhang Y."/>
            <person name="Huang X."/>
            <person name="Su Z."/>
            <person name="Tong W."/>
            <person name="Li J."/>
            <person name="Tong Z."/>
            <person name="Li S."/>
            <person name="Ye J."/>
            <person name="Wang L."/>
            <person name="Fang L."/>
            <person name="Lei T."/>
            <person name="Chen C.-S."/>
            <person name="Chen H.-C."/>
            <person name="Xu Z."/>
            <person name="Li H."/>
            <person name="Huang H."/>
            <person name="Zhang F."/>
            <person name="Xu H."/>
            <person name="Li N."/>
            <person name="Zhao C."/>
            <person name="Li S."/>
            <person name="Dong L."/>
            <person name="Huang Y."/>
            <person name="Li L."/>
            <person name="Xi Y."/>
            <person name="Qi Q."/>
            <person name="Li W."/>
            <person name="Zhang B."/>
            <person name="Hu W."/>
            <person name="Zhang Y."/>
            <person name="Tian X."/>
            <person name="Jiao Y."/>
            <person name="Liang X."/>
            <person name="Jin J."/>
            <person name="Gao L."/>
            <person name="Zheng W."/>
            <person name="Hao B."/>
            <person name="Liu S.-M."/>
            <person name="Wang W."/>
            <person name="Yuan L."/>
            <person name="Cao M."/>
            <person name="McDermott J."/>
            <person name="Samudrala R."/>
            <person name="Wang J."/>
            <person name="Wong G.K.-S."/>
            <person name="Yang H."/>
        </authorList>
    </citation>
    <scope>NUCLEOTIDE SEQUENCE [LARGE SCALE GENOMIC DNA]</scope>
    <source>
        <strain>cv. Nipponbare</strain>
    </source>
</reference>
<reference key="5">
    <citation type="journal article" date="2003" name="Science">
        <title>Collection, mapping, and annotation of over 28,000 cDNA clones from japonica rice.</title>
        <authorList>
            <consortium name="The rice full-length cDNA consortium"/>
        </authorList>
    </citation>
    <scope>NUCLEOTIDE SEQUENCE [LARGE SCALE MRNA]</scope>
    <source>
        <strain>cv. Nipponbare</strain>
    </source>
</reference>
<name>KPRS4_ORYSJ</name>
<feature type="chain" id="PRO_0000141100" description="Ribose-phosphate pyrophosphokinase 4">
    <location>
        <begin position="1"/>
        <end position="325"/>
    </location>
</feature>
<feature type="region of interest" description="Binding of phosphoribosylpyrophosphate" evidence="2">
    <location>
        <begin position="228"/>
        <end position="243"/>
    </location>
</feature>
<feature type="binding site" evidence="1">
    <location>
        <position position="145"/>
    </location>
    <ligand>
        <name>Mg(2+)</name>
        <dbReference type="ChEBI" id="CHEBI:18420"/>
    </ligand>
</feature>
<feature type="binding site" evidence="1">
    <location>
        <position position="147"/>
    </location>
    <ligand>
        <name>Mg(2+)</name>
        <dbReference type="ChEBI" id="CHEBI:18420"/>
    </ligand>
</feature>
<protein>
    <recommendedName>
        <fullName>Ribose-phosphate pyrophosphokinase 4</fullName>
        <ecNumber>2.7.6.1</ecNumber>
    </recommendedName>
    <alternativeName>
        <fullName>Phosphoribosyl pyrophosphate synthase 4</fullName>
    </alternativeName>
</protein>
<keyword id="KW-0067">ATP-binding</keyword>
<keyword id="KW-0418">Kinase</keyword>
<keyword id="KW-0460">Magnesium</keyword>
<keyword id="KW-0479">Metal-binding</keyword>
<keyword id="KW-0545">Nucleotide biosynthesis</keyword>
<keyword id="KW-0547">Nucleotide-binding</keyword>
<keyword id="KW-1185">Reference proteome</keyword>
<keyword id="KW-0808">Transferase</keyword>